<evidence type="ECO:0000255" key="1">
    <source>
        <dbReference type="HAMAP-Rule" id="MF_00541"/>
    </source>
</evidence>
<protein>
    <recommendedName>
        <fullName evidence="1">L-rhamnose isomerase</fullName>
        <ecNumber evidence="1">5.3.1.14</ecNumber>
    </recommendedName>
</protein>
<reference key="1">
    <citation type="journal article" date="2011" name="J. Bacteriol.">
        <title>Comparative genomics of 28 Salmonella enterica isolates: evidence for CRISPR-mediated adaptive sublineage evolution.</title>
        <authorList>
            <person name="Fricke W.F."/>
            <person name="Mammel M.K."/>
            <person name="McDermott P.F."/>
            <person name="Tartera C."/>
            <person name="White D.G."/>
            <person name="Leclerc J.E."/>
            <person name="Ravel J."/>
            <person name="Cebula T.A."/>
        </authorList>
    </citation>
    <scope>NUCLEOTIDE SEQUENCE [LARGE SCALE GENOMIC DNA]</scope>
    <source>
        <strain>SL483</strain>
    </source>
</reference>
<keyword id="KW-0963">Cytoplasm</keyword>
<keyword id="KW-0413">Isomerase</keyword>
<keyword id="KW-0464">Manganese</keyword>
<keyword id="KW-0479">Metal-binding</keyword>
<keyword id="KW-0684">Rhamnose metabolism</keyword>
<proteinExistence type="inferred from homology"/>
<feature type="chain" id="PRO_1000128886" description="L-rhamnose isomerase">
    <location>
        <begin position="1"/>
        <end position="419"/>
    </location>
</feature>
<feature type="binding site" evidence="1">
    <location>
        <position position="262"/>
    </location>
    <ligand>
        <name>Mn(2+)</name>
        <dbReference type="ChEBI" id="CHEBI:29035"/>
    </ligand>
</feature>
<feature type="binding site" evidence="1">
    <location>
        <position position="294"/>
    </location>
    <ligand>
        <name>Mn(2+)</name>
        <dbReference type="ChEBI" id="CHEBI:29035"/>
    </ligand>
</feature>
<feature type="binding site" evidence="1">
    <location>
        <position position="296"/>
    </location>
    <ligand>
        <name>Mn(2+)</name>
        <dbReference type="ChEBI" id="CHEBI:29035"/>
    </ligand>
</feature>
<dbReference type="EC" id="5.3.1.14" evidence="1"/>
<dbReference type="EMBL" id="CP001138">
    <property type="protein sequence ID" value="ACH50938.1"/>
    <property type="molecule type" value="Genomic_DNA"/>
</dbReference>
<dbReference type="RefSeq" id="WP_000211462.1">
    <property type="nucleotide sequence ID" value="NC_011149.1"/>
</dbReference>
<dbReference type="SMR" id="B5F0M7"/>
<dbReference type="KEGG" id="sea:SeAg_B4289"/>
<dbReference type="HOGENOM" id="CLU_052790_0_0_6"/>
<dbReference type="UniPathway" id="UPA00541">
    <property type="reaction ID" value="UER00601"/>
</dbReference>
<dbReference type="Proteomes" id="UP000008819">
    <property type="component" value="Chromosome"/>
</dbReference>
<dbReference type="GO" id="GO:0005737">
    <property type="term" value="C:cytoplasm"/>
    <property type="evidence" value="ECO:0007669"/>
    <property type="project" value="UniProtKB-SubCell"/>
</dbReference>
<dbReference type="GO" id="GO:0008740">
    <property type="term" value="F:L-rhamnose isomerase activity"/>
    <property type="evidence" value="ECO:0007669"/>
    <property type="project" value="UniProtKB-UniRule"/>
</dbReference>
<dbReference type="GO" id="GO:0030145">
    <property type="term" value="F:manganese ion binding"/>
    <property type="evidence" value="ECO:0007669"/>
    <property type="project" value="UniProtKB-UniRule"/>
</dbReference>
<dbReference type="GO" id="GO:0019324">
    <property type="term" value="P:L-lyxose metabolic process"/>
    <property type="evidence" value="ECO:0007669"/>
    <property type="project" value="TreeGrafter"/>
</dbReference>
<dbReference type="GO" id="GO:0019301">
    <property type="term" value="P:rhamnose catabolic process"/>
    <property type="evidence" value="ECO:0007669"/>
    <property type="project" value="UniProtKB-UniRule"/>
</dbReference>
<dbReference type="FunFam" id="3.20.20.150:FF:000006">
    <property type="entry name" value="L-rhamnose isomerase"/>
    <property type="match status" value="1"/>
</dbReference>
<dbReference type="Gene3D" id="3.20.20.150">
    <property type="entry name" value="Divalent-metal-dependent TIM barrel enzymes"/>
    <property type="match status" value="1"/>
</dbReference>
<dbReference type="HAMAP" id="MF_00541">
    <property type="entry name" value="RhaA"/>
    <property type="match status" value="1"/>
</dbReference>
<dbReference type="InterPro" id="IPR050337">
    <property type="entry name" value="L-rhamnose_isomerase"/>
</dbReference>
<dbReference type="InterPro" id="IPR009308">
    <property type="entry name" value="Rhamnose_isomerase"/>
</dbReference>
<dbReference type="InterPro" id="IPR036237">
    <property type="entry name" value="Xyl_isomerase-like_sf"/>
</dbReference>
<dbReference type="NCBIfam" id="NF002203">
    <property type="entry name" value="PRK01076.1"/>
    <property type="match status" value="1"/>
</dbReference>
<dbReference type="NCBIfam" id="TIGR01748">
    <property type="entry name" value="rhaA"/>
    <property type="match status" value="1"/>
</dbReference>
<dbReference type="PANTHER" id="PTHR30268">
    <property type="entry name" value="L-RHAMNOSE ISOMERASE"/>
    <property type="match status" value="1"/>
</dbReference>
<dbReference type="PANTHER" id="PTHR30268:SF0">
    <property type="entry name" value="L-RHAMNOSE ISOMERASE"/>
    <property type="match status" value="1"/>
</dbReference>
<dbReference type="Pfam" id="PF06134">
    <property type="entry name" value="RhaA"/>
    <property type="match status" value="1"/>
</dbReference>
<dbReference type="SUPFAM" id="SSF51658">
    <property type="entry name" value="Xylose isomerase-like"/>
    <property type="match status" value="1"/>
</dbReference>
<sequence length="419" mass="47471">MTTQLEQAWELAKQRFAAVGIDVEEALRQLDRLPVSMHCWQGDDVAGFENPEGSLTGGIQSTGNYPGKARNATELRADLEQALRLIPGPKRLNLHAIYLESDTPIARDQIKPEHFKNWVEWAKANRLGLDFNPTCFSHPLSADGFTLSHPDAKIRQFWIDHCKASRRVSAYFGEQLGTPSVMNIWIPDGMKDITVDRLAPRQRLLEALDEVISEKFDPAHHIDAVESKLFGIGAESYTVGSNEFYMGYATSRQTALCLDAGHFHPTEVISDKISAAMLYVPRLLLHVSRPVRWDSDHVVLLDDETQAIASEIVRHNLFDRVHIGLDFFDASINRVAAWVIGTRNMKKALLRALLEPTDQLRQLEASGDYTARLALLEEQKSLPWQAVWEMYCQRHDTPTGSQWLDSVRTYEKEILSKRS</sequence>
<comment type="function">
    <text evidence="1">Catalyzes the interconversion of L-rhamnose and L-rhamnulose.</text>
</comment>
<comment type="catalytic activity">
    <reaction evidence="1">
        <text>L-rhamnopyranose = L-rhamnulose</text>
        <dbReference type="Rhea" id="RHEA:23160"/>
        <dbReference type="ChEBI" id="CHEBI:17897"/>
        <dbReference type="ChEBI" id="CHEBI:62346"/>
        <dbReference type="EC" id="5.3.1.14"/>
    </reaction>
</comment>
<comment type="cofactor">
    <cofactor evidence="1">
        <name>Mn(2+)</name>
        <dbReference type="ChEBI" id="CHEBI:29035"/>
    </cofactor>
    <text evidence="1">Binds 1 Mn(2+) ion per subunit.</text>
</comment>
<comment type="pathway">
    <text evidence="1">Carbohydrate degradation; L-rhamnose degradation; glycerone phosphate from L-rhamnose: step 1/3.</text>
</comment>
<comment type="subunit">
    <text evidence="1">Homotetramer.</text>
</comment>
<comment type="subcellular location">
    <subcellularLocation>
        <location evidence="1">Cytoplasm</location>
    </subcellularLocation>
</comment>
<comment type="similarity">
    <text evidence="1">Belongs to the rhamnose isomerase family.</text>
</comment>
<gene>
    <name evidence="1" type="primary">rhaA</name>
    <name type="ordered locus">SeAg_B4289</name>
</gene>
<organism>
    <name type="scientific">Salmonella agona (strain SL483)</name>
    <dbReference type="NCBI Taxonomy" id="454166"/>
    <lineage>
        <taxon>Bacteria</taxon>
        <taxon>Pseudomonadati</taxon>
        <taxon>Pseudomonadota</taxon>
        <taxon>Gammaproteobacteria</taxon>
        <taxon>Enterobacterales</taxon>
        <taxon>Enterobacteriaceae</taxon>
        <taxon>Salmonella</taxon>
    </lineage>
</organism>
<name>RHAA_SALA4</name>
<accession>B5F0M7</accession>